<protein>
    <recommendedName>
        <fullName evidence="7">Cyclin-dependent kinase-like 2</fullName>
        <ecNumber>2.7.11.22</ecNumber>
    </recommendedName>
    <alternativeName>
        <fullName evidence="6">Protein kinase p56 KKIAMRE</fullName>
    </alternativeName>
    <alternativeName>
        <fullName>Serine/threonine-protein kinase KKIAMRE</fullName>
    </alternativeName>
</protein>
<proteinExistence type="evidence at protein level"/>
<sequence>MEKYENLGLVGEGSYGMVMKCRNKDTGRIVAIKKFLESDDDKMVKKIAMREIKLLKQLRHENLVNLLEVCKKKKRWYLVFEFVDHTILDDLELFPNGLDYQVVQKYLFQIINGIGFCHSHNIIHRDIKPENILVSQSGVVKLCDFGFARTLAAPGEVYTDYVATRWYRAPELLVGDVKYGKAVDVWAIGCLVTEMFMGEPLFPGDSDIDQLYHIMMCLGNLIPRHQELFNKNPVFAGVRLPEIKEREPLERRYPKLSEVVIDLAKKCLHIDPDKRPFCAELLHHDFFQMDGFAERFSQELQLKVQKDARNVSLSKKSQNRKKEKEKDDSLVEERKTLVVQDTNADPKIKDYKLFKIKGSKIDGEKAEKGNRASNASCLHDSRTSHNKIVPSTSLKDCSNVSVDHTRNPSVAIPPLTHNLSAVAPSINSGMGTETIPIQGYRVDEKTKKCSIPFVKPNRHSPSGIYNINVTTLVSGPPLSDDSGADLPQMEHQH</sequence>
<reference key="1">
    <citation type="journal article" date="1996" name="Oncogene">
        <title>Molecular cloning of the epidermal growth factor-stimulated protein kinase p56 KKIAMRE.</title>
        <authorList>
            <person name="Taglienti C.A."/>
            <person name="Wysk M."/>
            <person name="Davis R.J."/>
        </authorList>
    </citation>
    <scope>NUCLEOTIDE SEQUENCE [MRNA]</scope>
    <scope>TISSUE SPECIFICITY</scope>
    <scope>SUBCELLULAR LOCATION</scope>
    <source>
        <tissue>Fetal brain</tissue>
    </source>
</reference>
<reference key="2">
    <citation type="journal article" date="2004" name="Nat. Genet.">
        <title>Complete sequencing and characterization of 21,243 full-length human cDNAs.</title>
        <authorList>
            <person name="Ota T."/>
            <person name="Suzuki Y."/>
            <person name="Nishikawa T."/>
            <person name="Otsuki T."/>
            <person name="Sugiyama T."/>
            <person name="Irie R."/>
            <person name="Wakamatsu A."/>
            <person name="Hayashi K."/>
            <person name="Sato H."/>
            <person name="Nagai K."/>
            <person name="Kimura K."/>
            <person name="Makita H."/>
            <person name="Sekine M."/>
            <person name="Obayashi M."/>
            <person name="Nishi T."/>
            <person name="Shibahara T."/>
            <person name="Tanaka T."/>
            <person name="Ishii S."/>
            <person name="Yamamoto J."/>
            <person name="Saito K."/>
            <person name="Kawai Y."/>
            <person name="Isono Y."/>
            <person name="Nakamura Y."/>
            <person name="Nagahari K."/>
            <person name="Murakami K."/>
            <person name="Yasuda T."/>
            <person name="Iwayanagi T."/>
            <person name="Wagatsuma M."/>
            <person name="Shiratori A."/>
            <person name="Sudo H."/>
            <person name="Hosoiri T."/>
            <person name="Kaku Y."/>
            <person name="Kodaira H."/>
            <person name="Kondo H."/>
            <person name="Sugawara M."/>
            <person name="Takahashi M."/>
            <person name="Kanda K."/>
            <person name="Yokoi T."/>
            <person name="Furuya T."/>
            <person name="Kikkawa E."/>
            <person name="Omura Y."/>
            <person name="Abe K."/>
            <person name="Kamihara K."/>
            <person name="Katsuta N."/>
            <person name="Sato K."/>
            <person name="Tanikawa M."/>
            <person name="Yamazaki M."/>
            <person name="Ninomiya K."/>
            <person name="Ishibashi T."/>
            <person name="Yamashita H."/>
            <person name="Murakawa K."/>
            <person name="Fujimori K."/>
            <person name="Tanai H."/>
            <person name="Kimata M."/>
            <person name="Watanabe M."/>
            <person name="Hiraoka S."/>
            <person name="Chiba Y."/>
            <person name="Ishida S."/>
            <person name="Ono Y."/>
            <person name="Takiguchi S."/>
            <person name="Watanabe S."/>
            <person name="Yosida M."/>
            <person name="Hotuta T."/>
            <person name="Kusano J."/>
            <person name="Kanehori K."/>
            <person name="Takahashi-Fujii A."/>
            <person name="Hara H."/>
            <person name="Tanase T.-O."/>
            <person name="Nomura Y."/>
            <person name="Togiya S."/>
            <person name="Komai F."/>
            <person name="Hara R."/>
            <person name="Takeuchi K."/>
            <person name="Arita M."/>
            <person name="Imose N."/>
            <person name="Musashino K."/>
            <person name="Yuuki H."/>
            <person name="Oshima A."/>
            <person name="Sasaki N."/>
            <person name="Aotsuka S."/>
            <person name="Yoshikawa Y."/>
            <person name="Matsunawa H."/>
            <person name="Ichihara T."/>
            <person name="Shiohata N."/>
            <person name="Sano S."/>
            <person name="Moriya S."/>
            <person name="Momiyama H."/>
            <person name="Satoh N."/>
            <person name="Takami S."/>
            <person name="Terashima Y."/>
            <person name="Suzuki O."/>
            <person name="Nakagawa S."/>
            <person name="Senoh A."/>
            <person name="Mizoguchi H."/>
            <person name="Goto Y."/>
            <person name="Shimizu F."/>
            <person name="Wakebe H."/>
            <person name="Hishigaki H."/>
            <person name="Watanabe T."/>
            <person name="Sugiyama A."/>
            <person name="Takemoto M."/>
            <person name="Kawakami B."/>
            <person name="Yamazaki M."/>
            <person name="Watanabe K."/>
            <person name="Kumagai A."/>
            <person name="Itakura S."/>
            <person name="Fukuzumi Y."/>
            <person name="Fujimori Y."/>
            <person name="Komiyama M."/>
            <person name="Tashiro H."/>
            <person name="Tanigami A."/>
            <person name="Fujiwara T."/>
            <person name="Ono T."/>
            <person name="Yamada K."/>
            <person name="Fujii Y."/>
            <person name="Ozaki K."/>
            <person name="Hirao M."/>
            <person name="Ohmori Y."/>
            <person name="Kawabata A."/>
            <person name="Hikiji T."/>
            <person name="Kobatake N."/>
            <person name="Inagaki H."/>
            <person name="Ikema Y."/>
            <person name="Okamoto S."/>
            <person name="Okitani R."/>
            <person name="Kawakami T."/>
            <person name="Noguchi S."/>
            <person name="Itoh T."/>
            <person name="Shigeta K."/>
            <person name="Senba T."/>
            <person name="Matsumura K."/>
            <person name="Nakajima Y."/>
            <person name="Mizuno T."/>
            <person name="Morinaga M."/>
            <person name="Sasaki M."/>
            <person name="Togashi T."/>
            <person name="Oyama M."/>
            <person name="Hata H."/>
            <person name="Watanabe M."/>
            <person name="Komatsu T."/>
            <person name="Mizushima-Sugano J."/>
            <person name="Satoh T."/>
            <person name="Shirai Y."/>
            <person name="Takahashi Y."/>
            <person name="Nakagawa K."/>
            <person name="Okumura K."/>
            <person name="Nagase T."/>
            <person name="Nomura N."/>
            <person name="Kikuchi H."/>
            <person name="Masuho Y."/>
            <person name="Yamashita R."/>
            <person name="Nakai K."/>
            <person name="Yada T."/>
            <person name="Nakamura Y."/>
            <person name="Ohara O."/>
            <person name="Isogai T."/>
            <person name="Sugano S."/>
        </authorList>
    </citation>
    <scope>NUCLEOTIDE SEQUENCE [LARGE SCALE MRNA]</scope>
    <source>
        <tissue>Hippocampus</tissue>
    </source>
</reference>
<reference key="3">
    <citation type="submission" date="2005-07" db="EMBL/GenBank/DDBJ databases">
        <authorList>
            <person name="Mural R.J."/>
            <person name="Istrail S."/>
            <person name="Sutton G.G."/>
            <person name="Florea L."/>
            <person name="Halpern A.L."/>
            <person name="Mobarry C.M."/>
            <person name="Lippert R."/>
            <person name="Walenz B."/>
            <person name="Shatkay H."/>
            <person name="Dew I."/>
            <person name="Miller J.R."/>
            <person name="Flanigan M.J."/>
            <person name="Edwards N.J."/>
            <person name="Bolanos R."/>
            <person name="Fasulo D."/>
            <person name="Halldorsson B.V."/>
            <person name="Hannenhalli S."/>
            <person name="Turner R."/>
            <person name="Yooseph S."/>
            <person name="Lu F."/>
            <person name="Nusskern D.R."/>
            <person name="Shue B.C."/>
            <person name="Zheng X.H."/>
            <person name="Zhong F."/>
            <person name="Delcher A.L."/>
            <person name="Huson D.H."/>
            <person name="Kravitz S.A."/>
            <person name="Mouchard L."/>
            <person name="Reinert K."/>
            <person name="Remington K.A."/>
            <person name="Clark A.G."/>
            <person name="Waterman M.S."/>
            <person name="Eichler E.E."/>
            <person name="Adams M.D."/>
            <person name="Hunkapiller M.W."/>
            <person name="Myers E.W."/>
            <person name="Venter J.C."/>
        </authorList>
    </citation>
    <scope>NUCLEOTIDE SEQUENCE [LARGE SCALE GENOMIC DNA]</scope>
</reference>
<reference key="4">
    <citation type="journal article" date="2004" name="Genome Res.">
        <title>The status, quality, and expansion of the NIH full-length cDNA project: the Mammalian Gene Collection (MGC).</title>
        <authorList>
            <consortium name="The MGC Project Team"/>
        </authorList>
    </citation>
    <scope>NUCLEOTIDE SEQUENCE [LARGE SCALE MRNA]</scope>
    <source>
        <tissue>Brain</tissue>
    </source>
</reference>
<reference evidence="9 10" key="5">
    <citation type="journal article" date="2018" name="Cell Rep.">
        <title>CDKL Family Kinases Have Evolved Distinct Structural Features and Ciliary Function.</title>
        <authorList>
            <person name="Canning P."/>
            <person name="Park K."/>
            <person name="Goncalves J."/>
            <person name="Li C."/>
            <person name="Howard C.J."/>
            <person name="Sharpe T.D."/>
            <person name="Holt L.J."/>
            <person name="Pelletier L."/>
            <person name="Bullock A.N."/>
            <person name="Leroux M.R."/>
        </authorList>
    </citation>
    <scope>X-RAY CRYSTALLOGRAPHY (1.53 ANGSTROMS) OF 1-308 IN COMPLEX WITH SYNTHETIC INHIBITOR</scope>
</reference>
<reference key="6">
    <citation type="journal article" date="2007" name="Nature">
        <title>Patterns of somatic mutation in human cancer genomes.</title>
        <authorList>
            <person name="Greenman C."/>
            <person name="Stephens P."/>
            <person name="Smith R."/>
            <person name="Dalgliesh G.L."/>
            <person name="Hunter C."/>
            <person name="Bignell G."/>
            <person name="Davies H."/>
            <person name="Teague J."/>
            <person name="Butler A."/>
            <person name="Stevens C."/>
            <person name="Edkins S."/>
            <person name="O'Meara S."/>
            <person name="Vastrik I."/>
            <person name="Schmidt E.E."/>
            <person name="Avis T."/>
            <person name="Barthorpe S."/>
            <person name="Bhamra G."/>
            <person name="Buck G."/>
            <person name="Choudhury B."/>
            <person name="Clements J."/>
            <person name="Cole J."/>
            <person name="Dicks E."/>
            <person name="Forbes S."/>
            <person name="Gray K."/>
            <person name="Halliday K."/>
            <person name="Harrison R."/>
            <person name="Hills K."/>
            <person name="Hinton J."/>
            <person name="Jenkinson A."/>
            <person name="Jones D."/>
            <person name="Menzies A."/>
            <person name="Mironenko T."/>
            <person name="Perry J."/>
            <person name="Raine K."/>
            <person name="Richardson D."/>
            <person name="Shepherd R."/>
            <person name="Small A."/>
            <person name="Tofts C."/>
            <person name="Varian J."/>
            <person name="Webb T."/>
            <person name="West S."/>
            <person name="Widaa S."/>
            <person name="Yates A."/>
            <person name="Cahill D.P."/>
            <person name="Louis D.N."/>
            <person name="Goldstraw P."/>
            <person name="Nicholson A.G."/>
            <person name="Brasseur F."/>
            <person name="Looijenga L."/>
            <person name="Weber B.L."/>
            <person name="Chiew Y.-E."/>
            <person name="DeFazio A."/>
            <person name="Greaves M.F."/>
            <person name="Green A.R."/>
            <person name="Campbell P."/>
            <person name="Birney E."/>
            <person name="Easton D.F."/>
            <person name="Chenevix-Trench G."/>
            <person name="Tan M.-H."/>
            <person name="Khoo S.K."/>
            <person name="Teh B.T."/>
            <person name="Yuen S.T."/>
            <person name="Leung S.Y."/>
            <person name="Wooster R."/>
            <person name="Futreal P.A."/>
            <person name="Stratton M.R."/>
        </authorList>
    </citation>
    <scope>VARIANTS [LARGE SCALE ANALYSIS] ILE-98; GLN-149; THR-197 AND VAL-411</scope>
</reference>
<comment type="catalytic activity">
    <reaction>
        <text>L-seryl-[protein] + ATP = O-phospho-L-seryl-[protein] + ADP + H(+)</text>
        <dbReference type="Rhea" id="RHEA:17989"/>
        <dbReference type="Rhea" id="RHEA-COMP:9863"/>
        <dbReference type="Rhea" id="RHEA-COMP:11604"/>
        <dbReference type="ChEBI" id="CHEBI:15378"/>
        <dbReference type="ChEBI" id="CHEBI:29999"/>
        <dbReference type="ChEBI" id="CHEBI:30616"/>
        <dbReference type="ChEBI" id="CHEBI:83421"/>
        <dbReference type="ChEBI" id="CHEBI:456216"/>
        <dbReference type="EC" id="2.7.11.22"/>
    </reaction>
</comment>
<comment type="catalytic activity">
    <reaction>
        <text>L-threonyl-[protein] + ATP = O-phospho-L-threonyl-[protein] + ADP + H(+)</text>
        <dbReference type="Rhea" id="RHEA:46608"/>
        <dbReference type="Rhea" id="RHEA-COMP:11060"/>
        <dbReference type="Rhea" id="RHEA-COMP:11605"/>
        <dbReference type="ChEBI" id="CHEBI:15378"/>
        <dbReference type="ChEBI" id="CHEBI:30013"/>
        <dbReference type="ChEBI" id="CHEBI:30616"/>
        <dbReference type="ChEBI" id="CHEBI:61977"/>
        <dbReference type="ChEBI" id="CHEBI:456216"/>
        <dbReference type="EC" id="2.7.11.22"/>
    </reaction>
</comment>
<comment type="interaction">
    <interactant intactId="EBI-6381227">
        <id>Q92772</id>
    </interactant>
    <interactant intactId="EBI-11323222">
        <id>Q58FG0</id>
        <label>HSP90AA5P</label>
    </interactant>
    <organismsDiffer>false</organismsDiffer>
    <experiments>3</experiments>
</comment>
<comment type="subcellular location">
    <subcellularLocation>
        <location evidence="5">Cytoplasm</location>
    </subcellularLocation>
    <subcellularLocation>
        <location evidence="5">Nucleus</location>
    </subcellularLocation>
</comment>
<comment type="tissue specificity">
    <text evidence="5">Expressed in testis and kidney, and at lower level in brain and lung.</text>
</comment>
<comment type="domain">
    <text>The [NKR]KIAxRE motif seems to be a cyclin-binding region.</text>
</comment>
<comment type="similarity">
    <text evidence="7">Belongs to the protein kinase superfamily. CMGC Ser/Thr protein kinase family. CDC2/CDKX subfamily.</text>
</comment>
<gene>
    <name evidence="8" type="primary">CDKL2</name>
</gene>
<accession>Q92772</accession>
<accession>B2R695</accession>
<feature type="chain" id="PRO_0000085814" description="Cyclin-dependent kinase-like 2">
    <location>
        <begin position="1"/>
        <end position="493"/>
    </location>
</feature>
<feature type="domain" description="Protein kinase" evidence="1">
    <location>
        <begin position="4"/>
        <end position="287"/>
    </location>
</feature>
<feature type="region of interest" description="Disordered" evidence="3">
    <location>
        <begin position="363"/>
        <end position="384"/>
    </location>
</feature>
<feature type="short sequence motif" description="[NKR]KIAxRE">
    <location>
        <begin position="45"/>
        <end position="51"/>
    </location>
</feature>
<feature type="active site" description="Proton acceptor" evidence="1 2">
    <location>
        <position position="126"/>
    </location>
</feature>
<feature type="binding site" evidence="1">
    <location>
        <begin position="10"/>
        <end position="18"/>
    </location>
    <ligand>
        <name>ATP</name>
        <dbReference type="ChEBI" id="CHEBI:30616"/>
    </ligand>
</feature>
<feature type="binding site" evidence="1">
    <location>
        <position position="33"/>
    </location>
    <ligand>
        <name>ATP</name>
        <dbReference type="ChEBI" id="CHEBI:30616"/>
    </ligand>
</feature>
<feature type="sequence variant" id="VAR_053928" description="In dbSNP:rs35921414.">
    <original>Y</original>
    <variation>S</variation>
    <location>
        <position position="77"/>
    </location>
</feature>
<feature type="sequence variant" id="VAR_041987" description="In an ovarian papillary serous adenocarcinoma sample; somatic mutation." evidence="4">
    <original>L</original>
    <variation>I</variation>
    <location>
        <position position="98"/>
    </location>
</feature>
<feature type="sequence variant" id="VAR_053929" description="In dbSNP:rs17000707.">
    <original>I</original>
    <variation>T</variation>
    <location>
        <position position="132"/>
    </location>
</feature>
<feature type="sequence variant" id="VAR_041988" description="In an ovarian mucinous carcinoma sample; somatic mutation; dbSNP:rs755711267." evidence="4">
    <original>R</original>
    <variation>Q</variation>
    <location>
        <position position="149"/>
    </location>
</feature>
<feature type="sequence variant" id="VAR_041989" description="In dbSNP:rs56343717." evidence="4">
    <original>M</original>
    <variation>T</variation>
    <location>
        <position position="197"/>
    </location>
</feature>
<feature type="sequence variant" id="VAR_041990" description="In dbSNP:rs56231363." evidence="4">
    <original>A</original>
    <variation>V</variation>
    <location>
        <position position="411"/>
    </location>
</feature>
<feature type="helix" evidence="11">
    <location>
        <begin position="1"/>
        <end position="3"/>
    </location>
</feature>
<feature type="strand" evidence="11">
    <location>
        <begin position="4"/>
        <end position="9"/>
    </location>
</feature>
<feature type="helix" evidence="11">
    <location>
        <begin position="10"/>
        <end position="13"/>
    </location>
</feature>
<feature type="strand" evidence="11">
    <location>
        <begin position="16"/>
        <end position="23"/>
    </location>
</feature>
<feature type="turn" evidence="11">
    <location>
        <begin position="24"/>
        <end position="26"/>
    </location>
</feature>
<feature type="strand" evidence="11">
    <location>
        <begin position="29"/>
        <end position="37"/>
    </location>
</feature>
<feature type="helix" evidence="11">
    <location>
        <begin position="42"/>
        <end position="57"/>
    </location>
</feature>
<feature type="strand" evidence="11">
    <location>
        <begin position="66"/>
        <end position="72"/>
    </location>
</feature>
<feature type="strand" evidence="11">
    <location>
        <begin position="75"/>
        <end position="81"/>
    </location>
</feature>
<feature type="strand" evidence="11">
    <location>
        <begin position="84"/>
        <end position="86"/>
    </location>
</feature>
<feature type="helix" evidence="11">
    <location>
        <begin position="87"/>
        <end position="93"/>
    </location>
</feature>
<feature type="helix" evidence="11">
    <location>
        <begin position="100"/>
        <end position="119"/>
    </location>
</feature>
<feature type="helix" evidence="11">
    <location>
        <begin position="129"/>
        <end position="131"/>
    </location>
</feature>
<feature type="strand" evidence="11">
    <location>
        <begin position="132"/>
        <end position="134"/>
    </location>
</feature>
<feature type="strand" evidence="11">
    <location>
        <begin position="140"/>
        <end position="142"/>
    </location>
</feature>
<feature type="helix" evidence="12">
    <location>
        <begin position="147"/>
        <end position="150"/>
    </location>
</feature>
<feature type="helix" evidence="12">
    <location>
        <begin position="154"/>
        <end position="163"/>
    </location>
</feature>
<feature type="helix" evidence="12">
    <location>
        <begin position="165"/>
        <end position="167"/>
    </location>
</feature>
<feature type="helix" evidence="11">
    <location>
        <begin position="170"/>
        <end position="173"/>
    </location>
</feature>
<feature type="helix" evidence="11">
    <location>
        <begin position="182"/>
        <end position="197"/>
    </location>
</feature>
<feature type="helix" evidence="11">
    <location>
        <begin position="207"/>
        <end position="218"/>
    </location>
</feature>
<feature type="helix" evidence="11">
    <location>
        <begin position="223"/>
        <end position="231"/>
    </location>
</feature>
<feature type="helix" evidence="11">
    <location>
        <begin position="233"/>
        <end position="235"/>
    </location>
</feature>
<feature type="helix" evidence="11">
    <location>
        <begin position="249"/>
        <end position="252"/>
    </location>
</feature>
<feature type="helix" evidence="11">
    <location>
        <begin position="258"/>
        <end position="267"/>
    </location>
</feature>
<feature type="helix" evidence="11">
    <location>
        <begin position="272"/>
        <end position="274"/>
    </location>
</feature>
<feature type="helix" evidence="11">
    <location>
        <begin position="278"/>
        <end position="283"/>
    </location>
</feature>
<feature type="helix" evidence="11">
    <location>
        <begin position="285"/>
        <end position="288"/>
    </location>
</feature>
<feature type="helix" evidence="11">
    <location>
        <begin position="289"/>
        <end position="291"/>
    </location>
</feature>
<feature type="helix" evidence="11">
    <location>
        <begin position="292"/>
        <end position="301"/>
    </location>
</feature>
<evidence type="ECO:0000255" key="1">
    <source>
        <dbReference type="PROSITE-ProRule" id="PRU00159"/>
    </source>
</evidence>
<evidence type="ECO:0000255" key="2">
    <source>
        <dbReference type="PROSITE-ProRule" id="PRU10027"/>
    </source>
</evidence>
<evidence type="ECO:0000256" key="3">
    <source>
        <dbReference type="SAM" id="MobiDB-lite"/>
    </source>
</evidence>
<evidence type="ECO:0000269" key="4">
    <source>
    </source>
</evidence>
<evidence type="ECO:0000269" key="5">
    <source>
    </source>
</evidence>
<evidence type="ECO:0000303" key="6">
    <source>
    </source>
</evidence>
<evidence type="ECO:0000305" key="7"/>
<evidence type="ECO:0000312" key="8">
    <source>
        <dbReference type="HGNC" id="HGNC:1782"/>
    </source>
</evidence>
<evidence type="ECO:0007744" key="9">
    <source>
        <dbReference type="PDB" id="4AAA"/>
    </source>
</evidence>
<evidence type="ECO:0007744" key="10">
    <source>
        <dbReference type="PDB" id="4BBM"/>
    </source>
</evidence>
<evidence type="ECO:0007829" key="11">
    <source>
        <dbReference type="PDB" id="4AAA"/>
    </source>
</evidence>
<evidence type="ECO:0007829" key="12">
    <source>
        <dbReference type="PDB" id="4BBM"/>
    </source>
</evidence>
<organism>
    <name type="scientific">Homo sapiens</name>
    <name type="common">Human</name>
    <dbReference type="NCBI Taxonomy" id="9606"/>
    <lineage>
        <taxon>Eukaryota</taxon>
        <taxon>Metazoa</taxon>
        <taxon>Chordata</taxon>
        <taxon>Craniata</taxon>
        <taxon>Vertebrata</taxon>
        <taxon>Euteleostomi</taxon>
        <taxon>Mammalia</taxon>
        <taxon>Eutheria</taxon>
        <taxon>Euarchontoglires</taxon>
        <taxon>Primates</taxon>
        <taxon>Haplorrhini</taxon>
        <taxon>Catarrhini</taxon>
        <taxon>Hominidae</taxon>
        <taxon>Homo</taxon>
    </lineage>
</organism>
<dbReference type="EC" id="2.7.11.22"/>
<dbReference type="EMBL" id="U35146">
    <property type="protein sequence ID" value="AAC50918.1"/>
    <property type="molecule type" value="mRNA"/>
</dbReference>
<dbReference type="EMBL" id="AK312490">
    <property type="protein sequence ID" value="BAG35392.1"/>
    <property type="molecule type" value="mRNA"/>
</dbReference>
<dbReference type="EMBL" id="CH471057">
    <property type="protein sequence ID" value="EAX05740.1"/>
    <property type="molecule type" value="Genomic_DNA"/>
</dbReference>
<dbReference type="EMBL" id="BC093646">
    <property type="protein sequence ID" value="AAH93646.1"/>
    <property type="molecule type" value="mRNA"/>
</dbReference>
<dbReference type="EMBL" id="BC093981">
    <property type="protein sequence ID" value="AAH93981.1"/>
    <property type="molecule type" value="mRNA"/>
</dbReference>
<dbReference type="CCDS" id="CCDS3570.1"/>
<dbReference type="RefSeq" id="NP_001317653.1">
    <property type="nucleotide sequence ID" value="NM_001330724.1"/>
</dbReference>
<dbReference type="RefSeq" id="NP_003939.1">
    <property type="nucleotide sequence ID" value="NM_003948.5"/>
</dbReference>
<dbReference type="RefSeq" id="XP_016864299.1">
    <property type="nucleotide sequence ID" value="XM_017008810.2"/>
</dbReference>
<dbReference type="RefSeq" id="XP_047272340.1">
    <property type="nucleotide sequence ID" value="XM_047416384.1"/>
</dbReference>
<dbReference type="RefSeq" id="XP_054207164.1">
    <property type="nucleotide sequence ID" value="XM_054351189.1"/>
</dbReference>
<dbReference type="PDB" id="4AAA">
    <property type="method" value="X-ray"/>
    <property type="resolution" value="1.53 A"/>
    <property type="chains" value="A=1-308"/>
</dbReference>
<dbReference type="PDB" id="4BBM">
    <property type="method" value="X-ray"/>
    <property type="resolution" value="2.00 A"/>
    <property type="chains" value="A/B=1-308"/>
</dbReference>
<dbReference type="PDB" id="8S6I">
    <property type="method" value="X-ray"/>
    <property type="resolution" value="1.72 A"/>
    <property type="chains" value="A=1-308"/>
</dbReference>
<dbReference type="PDBsum" id="4AAA"/>
<dbReference type="PDBsum" id="4BBM"/>
<dbReference type="PDBsum" id="8S6I"/>
<dbReference type="SMR" id="Q92772"/>
<dbReference type="BioGRID" id="114479">
    <property type="interactions" value="71"/>
</dbReference>
<dbReference type="FunCoup" id="Q92772">
    <property type="interactions" value="1449"/>
</dbReference>
<dbReference type="IntAct" id="Q92772">
    <property type="interactions" value="67"/>
</dbReference>
<dbReference type="STRING" id="9606.ENSP00000306340"/>
<dbReference type="BindingDB" id="Q92772"/>
<dbReference type="ChEMBL" id="CHEMBL5728"/>
<dbReference type="DrugBank" id="DB12010">
    <property type="generic name" value="Fostamatinib"/>
</dbReference>
<dbReference type="DrugCentral" id="Q92772"/>
<dbReference type="iPTMnet" id="Q92772"/>
<dbReference type="PhosphoSitePlus" id="Q92772"/>
<dbReference type="BioMuta" id="CDKL2"/>
<dbReference type="DMDM" id="74762639"/>
<dbReference type="CPTAC" id="non-CPTAC-3026"/>
<dbReference type="CPTAC" id="non-CPTAC-3027"/>
<dbReference type="jPOST" id="Q92772"/>
<dbReference type="MassIVE" id="Q92772"/>
<dbReference type="PaxDb" id="9606-ENSP00000412365"/>
<dbReference type="PeptideAtlas" id="Q92772"/>
<dbReference type="Antibodypedia" id="24675">
    <property type="antibodies" value="254 antibodies from 28 providers"/>
</dbReference>
<dbReference type="DNASU" id="8999"/>
<dbReference type="Ensembl" id="ENST00000429927.6">
    <property type="protein sequence ID" value="ENSP00000412365.2"/>
    <property type="gene ID" value="ENSG00000138769.11"/>
</dbReference>
<dbReference type="GeneID" id="8999"/>
<dbReference type="KEGG" id="hsa:8999"/>
<dbReference type="UCSC" id="uc003hiq.4">
    <property type="organism name" value="human"/>
</dbReference>
<dbReference type="AGR" id="HGNC:1782"/>
<dbReference type="CTD" id="8999"/>
<dbReference type="DisGeNET" id="8999"/>
<dbReference type="GeneCards" id="CDKL2"/>
<dbReference type="HGNC" id="HGNC:1782">
    <property type="gene designation" value="CDKL2"/>
</dbReference>
<dbReference type="HPA" id="ENSG00000138769">
    <property type="expression patterns" value="Tissue enhanced (retina, testis)"/>
</dbReference>
<dbReference type="MIM" id="603442">
    <property type="type" value="gene"/>
</dbReference>
<dbReference type="neXtProt" id="NX_Q92772"/>
<dbReference type="OpenTargets" id="ENSG00000138769"/>
<dbReference type="PharmGKB" id="PA26318"/>
<dbReference type="VEuPathDB" id="HostDB:ENSG00000138769"/>
<dbReference type="eggNOG" id="KOG0593">
    <property type="taxonomic scope" value="Eukaryota"/>
</dbReference>
<dbReference type="GeneTree" id="ENSGT00940000160368"/>
<dbReference type="HOGENOM" id="CLU_000288_136_0_1"/>
<dbReference type="InParanoid" id="Q92772"/>
<dbReference type="OrthoDB" id="548217at2759"/>
<dbReference type="PAN-GO" id="Q92772">
    <property type="GO annotations" value="3 GO annotations based on evolutionary models"/>
</dbReference>
<dbReference type="PhylomeDB" id="Q92772"/>
<dbReference type="TreeFam" id="TF101031"/>
<dbReference type="PathwayCommons" id="Q92772"/>
<dbReference type="SignaLink" id="Q92772"/>
<dbReference type="BioGRID-ORCS" id="8999">
    <property type="hits" value="18 hits in 1177 CRISPR screens"/>
</dbReference>
<dbReference type="ChiTaRS" id="CDKL2">
    <property type="organism name" value="human"/>
</dbReference>
<dbReference type="EvolutionaryTrace" id="Q92772"/>
<dbReference type="GeneWiki" id="CDKL2"/>
<dbReference type="GenomeRNAi" id="8999"/>
<dbReference type="Pharos" id="Q92772">
    <property type="development level" value="Tchem"/>
</dbReference>
<dbReference type="PRO" id="PR:Q92772"/>
<dbReference type="Proteomes" id="UP000005640">
    <property type="component" value="Chromosome 4"/>
</dbReference>
<dbReference type="RNAct" id="Q92772">
    <property type="molecule type" value="protein"/>
</dbReference>
<dbReference type="Bgee" id="ENSG00000138769">
    <property type="expression patterns" value="Expressed in endothelial cell and 147 other cell types or tissues"/>
</dbReference>
<dbReference type="ExpressionAtlas" id="Q92772">
    <property type="expression patterns" value="baseline and differential"/>
</dbReference>
<dbReference type="GO" id="GO:0005813">
    <property type="term" value="C:centrosome"/>
    <property type="evidence" value="ECO:0000314"/>
    <property type="project" value="HPA"/>
</dbReference>
<dbReference type="GO" id="GO:0005737">
    <property type="term" value="C:cytoplasm"/>
    <property type="evidence" value="ECO:0007669"/>
    <property type="project" value="UniProtKB-SubCell"/>
</dbReference>
<dbReference type="GO" id="GO:0005654">
    <property type="term" value="C:nucleoplasm"/>
    <property type="evidence" value="ECO:0000314"/>
    <property type="project" value="HPA"/>
</dbReference>
<dbReference type="GO" id="GO:0005634">
    <property type="term" value="C:nucleus"/>
    <property type="evidence" value="ECO:0000318"/>
    <property type="project" value="GO_Central"/>
</dbReference>
<dbReference type="GO" id="GO:0005524">
    <property type="term" value="F:ATP binding"/>
    <property type="evidence" value="ECO:0007669"/>
    <property type="project" value="UniProtKB-KW"/>
</dbReference>
<dbReference type="GO" id="GO:0004693">
    <property type="term" value="F:cyclin-dependent protein serine/threonine kinase activity"/>
    <property type="evidence" value="ECO:0007669"/>
    <property type="project" value="UniProtKB-EC"/>
</dbReference>
<dbReference type="GO" id="GO:0004672">
    <property type="term" value="F:protein kinase activity"/>
    <property type="evidence" value="ECO:0000304"/>
    <property type="project" value="ProtInc"/>
</dbReference>
<dbReference type="GO" id="GO:0106310">
    <property type="term" value="F:protein serine kinase activity"/>
    <property type="evidence" value="ECO:0007669"/>
    <property type="project" value="RHEA"/>
</dbReference>
<dbReference type="GO" id="GO:0004674">
    <property type="term" value="F:protein serine/threonine kinase activity"/>
    <property type="evidence" value="ECO:0000318"/>
    <property type="project" value="GO_Central"/>
</dbReference>
<dbReference type="GO" id="GO:0007548">
    <property type="term" value="P:sex differentiation"/>
    <property type="evidence" value="ECO:0000304"/>
    <property type="project" value="ProtInc"/>
</dbReference>
<dbReference type="GO" id="GO:0007165">
    <property type="term" value="P:signal transduction"/>
    <property type="evidence" value="ECO:0000304"/>
    <property type="project" value="ProtInc"/>
</dbReference>
<dbReference type="CDD" id="cd07846">
    <property type="entry name" value="STKc_CDKL2_3"/>
    <property type="match status" value="1"/>
</dbReference>
<dbReference type="FunFam" id="3.30.200.20:FF:000049">
    <property type="entry name" value="cyclin-dependent kinase-like 1 isoform X1"/>
    <property type="match status" value="1"/>
</dbReference>
<dbReference type="FunFam" id="1.10.510.10:FF:000261">
    <property type="entry name" value="cyclin-dependent kinase-like 2 isoform X2"/>
    <property type="match status" value="1"/>
</dbReference>
<dbReference type="Gene3D" id="3.30.200.20">
    <property type="entry name" value="Phosphorylase Kinase, domain 1"/>
    <property type="match status" value="1"/>
</dbReference>
<dbReference type="Gene3D" id="1.10.510.10">
    <property type="entry name" value="Transferase(Phosphotransferase) domain 1"/>
    <property type="match status" value="1"/>
</dbReference>
<dbReference type="InterPro" id="IPR050108">
    <property type="entry name" value="CDK"/>
</dbReference>
<dbReference type="InterPro" id="IPR011009">
    <property type="entry name" value="Kinase-like_dom_sf"/>
</dbReference>
<dbReference type="InterPro" id="IPR000719">
    <property type="entry name" value="Prot_kinase_dom"/>
</dbReference>
<dbReference type="InterPro" id="IPR017441">
    <property type="entry name" value="Protein_kinase_ATP_BS"/>
</dbReference>
<dbReference type="InterPro" id="IPR008271">
    <property type="entry name" value="Ser/Thr_kinase_AS"/>
</dbReference>
<dbReference type="PANTHER" id="PTHR24056">
    <property type="entry name" value="CELL DIVISION PROTEIN KINASE"/>
    <property type="match status" value="1"/>
</dbReference>
<dbReference type="PANTHER" id="PTHR24056:SF241">
    <property type="entry name" value="CYCLIN-DEPENDENT KINASE-LIKE 2"/>
    <property type="match status" value="1"/>
</dbReference>
<dbReference type="Pfam" id="PF00069">
    <property type="entry name" value="Pkinase"/>
    <property type="match status" value="1"/>
</dbReference>
<dbReference type="SMART" id="SM00220">
    <property type="entry name" value="S_TKc"/>
    <property type="match status" value="1"/>
</dbReference>
<dbReference type="SUPFAM" id="SSF56112">
    <property type="entry name" value="Protein kinase-like (PK-like)"/>
    <property type="match status" value="1"/>
</dbReference>
<dbReference type="PROSITE" id="PS00107">
    <property type="entry name" value="PROTEIN_KINASE_ATP"/>
    <property type="match status" value="1"/>
</dbReference>
<dbReference type="PROSITE" id="PS50011">
    <property type="entry name" value="PROTEIN_KINASE_DOM"/>
    <property type="match status" value="1"/>
</dbReference>
<dbReference type="PROSITE" id="PS00108">
    <property type="entry name" value="PROTEIN_KINASE_ST"/>
    <property type="match status" value="1"/>
</dbReference>
<name>CDKL2_HUMAN</name>
<keyword id="KW-0002">3D-structure</keyword>
<keyword id="KW-0067">ATP-binding</keyword>
<keyword id="KW-0963">Cytoplasm</keyword>
<keyword id="KW-0418">Kinase</keyword>
<keyword id="KW-0547">Nucleotide-binding</keyword>
<keyword id="KW-0539">Nucleus</keyword>
<keyword id="KW-1267">Proteomics identification</keyword>
<keyword id="KW-1185">Reference proteome</keyword>
<keyword id="KW-0723">Serine/threonine-protein kinase</keyword>
<keyword id="KW-0808">Transferase</keyword>